<gene>
    <name type="primary">yaaN</name>
    <name type="ordered locus">BSU00260</name>
</gene>
<feature type="chain" id="PRO_0000172800" description="Uncharacterized protein YaaN">
    <location>
        <begin position="1"/>
        <end position="386"/>
    </location>
</feature>
<feature type="sequence conflict" description="In Ref. 3; AAA22892." evidence="1" ref="3">
    <original>E</original>
    <variation>M</variation>
    <location>
        <position position="191"/>
    </location>
</feature>
<proteinExistence type="inferred from homology"/>
<comment type="similarity">
    <text evidence="1">Belongs to the TelA family.</text>
</comment>
<evidence type="ECO:0000305" key="1"/>
<protein>
    <recommendedName>
        <fullName>Uncharacterized protein YaaN</fullName>
    </recommendedName>
</protein>
<reference key="1">
    <citation type="journal article" date="1994" name="DNA Res.">
        <title>Systematic sequencing of the 180 kilobase region of the Bacillus subtilis chromosome containing the replication origin.</title>
        <authorList>
            <person name="Ogasawara N."/>
            <person name="Nakai S."/>
            <person name="Yoshikawa H."/>
        </authorList>
    </citation>
    <scope>NUCLEOTIDE SEQUENCE [GENOMIC DNA]</scope>
    <source>
        <strain>168</strain>
    </source>
</reference>
<reference key="2">
    <citation type="journal article" date="1997" name="Nature">
        <title>The complete genome sequence of the Gram-positive bacterium Bacillus subtilis.</title>
        <authorList>
            <person name="Kunst F."/>
            <person name="Ogasawara N."/>
            <person name="Moszer I."/>
            <person name="Albertini A.M."/>
            <person name="Alloni G."/>
            <person name="Azevedo V."/>
            <person name="Bertero M.G."/>
            <person name="Bessieres P."/>
            <person name="Bolotin A."/>
            <person name="Borchert S."/>
            <person name="Borriss R."/>
            <person name="Boursier L."/>
            <person name="Brans A."/>
            <person name="Braun M."/>
            <person name="Brignell S.C."/>
            <person name="Bron S."/>
            <person name="Brouillet S."/>
            <person name="Bruschi C.V."/>
            <person name="Caldwell B."/>
            <person name="Capuano V."/>
            <person name="Carter N.M."/>
            <person name="Choi S.-K."/>
            <person name="Codani J.-J."/>
            <person name="Connerton I.F."/>
            <person name="Cummings N.J."/>
            <person name="Daniel R.A."/>
            <person name="Denizot F."/>
            <person name="Devine K.M."/>
            <person name="Duesterhoeft A."/>
            <person name="Ehrlich S.D."/>
            <person name="Emmerson P.T."/>
            <person name="Entian K.-D."/>
            <person name="Errington J."/>
            <person name="Fabret C."/>
            <person name="Ferrari E."/>
            <person name="Foulger D."/>
            <person name="Fritz C."/>
            <person name="Fujita M."/>
            <person name="Fujita Y."/>
            <person name="Fuma S."/>
            <person name="Galizzi A."/>
            <person name="Galleron N."/>
            <person name="Ghim S.-Y."/>
            <person name="Glaser P."/>
            <person name="Goffeau A."/>
            <person name="Golightly E.J."/>
            <person name="Grandi G."/>
            <person name="Guiseppi G."/>
            <person name="Guy B.J."/>
            <person name="Haga K."/>
            <person name="Haiech J."/>
            <person name="Harwood C.R."/>
            <person name="Henaut A."/>
            <person name="Hilbert H."/>
            <person name="Holsappel S."/>
            <person name="Hosono S."/>
            <person name="Hullo M.-F."/>
            <person name="Itaya M."/>
            <person name="Jones L.-M."/>
            <person name="Joris B."/>
            <person name="Karamata D."/>
            <person name="Kasahara Y."/>
            <person name="Klaerr-Blanchard M."/>
            <person name="Klein C."/>
            <person name="Kobayashi Y."/>
            <person name="Koetter P."/>
            <person name="Koningstein G."/>
            <person name="Krogh S."/>
            <person name="Kumano M."/>
            <person name="Kurita K."/>
            <person name="Lapidus A."/>
            <person name="Lardinois S."/>
            <person name="Lauber J."/>
            <person name="Lazarevic V."/>
            <person name="Lee S.-M."/>
            <person name="Levine A."/>
            <person name="Liu H."/>
            <person name="Masuda S."/>
            <person name="Mauel C."/>
            <person name="Medigue C."/>
            <person name="Medina N."/>
            <person name="Mellado R.P."/>
            <person name="Mizuno M."/>
            <person name="Moestl D."/>
            <person name="Nakai S."/>
            <person name="Noback M."/>
            <person name="Noone D."/>
            <person name="O'Reilly M."/>
            <person name="Ogawa K."/>
            <person name="Ogiwara A."/>
            <person name="Oudega B."/>
            <person name="Park S.-H."/>
            <person name="Parro V."/>
            <person name="Pohl T.M."/>
            <person name="Portetelle D."/>
            <person name="Porwollik S."/>
            <person name="Prescott A.M."/>
            <person name="Presecan E."/>
            <person name="Pujic P."/>
            <person name="Purnelle B."/>
            <person name="Rapoport G."/>
            <person name="Rey M."/>
            <person name="Reynolds S."/>
            <person name="Rieger M."/>
            <person name="Rivolta C."/>
            <person name="Rocha E."/>
            <person name="Roche B."/>
            <person name="Rose M."/>
            <person name="Sadaie Y."/>
            <person name="Sato T."/>
            <person name="Scanlan E."/>
            <person name="Schleich S."/>
            <person name="Schroeter R."/>
            <person name="Scoffone F."/>
            <person name="Sekiguchi J."/>
            <person name="Sekowska A."/>
            <person name="Seror S.J."/>
            <person name="Serror P."/>
            <person name="Shin B.-S."/>
            <person name="Soldo B."/>
            <person name="Sorokin A."/>
            <person name="Tacconi E."/>
            <person name="Takagi T."/>
            <person name="Takahashi H."/>
            <person name="Takemaru K."/>
            <person name="Takeuchi M."/>
            <person name="Tamakoshi A."/>
            <person name="Tanaka T."/>
            <person name="Terpstra P."/>
            <person name="Tognoni A."/>
            <person name="Tosato V."/>
            <person name="Uchiyama S."/>
            <person name="Vandenbol M."/>
            <person name="Vannier F."/>
            <person name="Vassarotti A."/>
            <person name="Viari A."/>
            <person name="Wambutt R."/>
            <person name="Wedler E."/>
            <person name="Wedler H."/>
            <person name="Weitzenegger T."/>
            <person name="Winters P."/>
            <person name="Wipat A."/>
            <person name="Yamamoto H."/>
            <person name="Yamane K."/>
            <person name="Yasumoto K."/>
            <person name="Yata K."/>
            <person name="Yoshida K."/>
            <person name="Yoshikawa H.-F."/>
            <person name="Zumstein E."/>
            <person name="Yoshikawa H."/>
            <person name="Danchin A."/>
        </authorList>
    </citation>
    <scope>NUCLEOTIDE SEQUENCE [LARGE SCALE GENOMIC DNA]</scope>
    <source>
        <strain>168</strain>
    </source>
</reference>
<reference key="3">
    <citation type="submission" date="1992-06" db="EMBL/GenBank/DDBJ databases">
        <title>Characterization of the Bacillus subtilis xpaC gene, which in double copy causes aberrant cell morphology, filamentation and inhibits sporulation.</title>
        <authorList>
            <person name="Bookstein C."/>
            <person name="Edwards C.W."/>
            <person name="Hulett F.M."/>
        </authorList>
    </citation>
    <scope>NUCLEOTIDE SEQUENCE [GENOMIC DNA] OF 1-191</scope>
    <source>
        <strain>168</strain>
    </source>
</reference>
<keyword id="KW-1185">Reference proteome</keyword>
<organism>
    <name type="scientific">Bacillus subtilis (strain 168)</name>
    <dbReference type="NCBI Taxonomy" id="224308"/>
    <lineage>
        <taxon>Bacteria</taxon>
        <taxon>Bacillati</taxon>
        <taxon>Bacillota</taxon>
        <taxon>Bacilli</taxon>
        <taxon>Bacillales</taxon>
        <taxon>Bacillaceae</taxon>
        <taxon>Bacillus</taxon>
    </lineage>
</organism>
<sequence>MNRDQSDLHIDELLADPFGGNIEIPGSEAVKAEKEQVRLVDVLPEENKEKAIQLAGQIDHKNMQSIVLYGSQAQSKLLNFSHDMINHVQKKDVGEIGEILGELMKKLEQVNPDDLQSKKKGFLARMFGRVSSSLQEVLSKYQKTSVQIDRISLKLEHSKNALISDNKLLEQLYEKNKEYFAALNVYIAAGELKLEELKTKTIPELKQQAESSDHNQMAVQEVNDLIQFADRLDKRVHDLLLSRQITIQSAPQIRLIQNTNQALAEKIQSSIVTAIPLWKNQVAIALTLLRQRNAVDAQQKVSDTTNELLLKNAELLKTNTIETARANERGLVDIDTLKKVQESLISTLEETLTIQEEGRIKRRQAEEELMMMEGDLKQKLITIKER</sequence>
<dbReference type="EMBL" id="D26185">
    <property type="protein sequence ID" value="BAA05262.1"/>
    <property type="molecule type" value="Genomic_DNA"/>
</dbReference>
<dbReference type="EMBL" id="AL009126">
    <property type="protein sequence ID" value="CAB11802.1"/>
    <property type="molecule type" value="Genomic_DNA"/>
</dbReference>
<dbReference type="EMBL" id="M96156">
    <property type="protein sequence ID" value="AAA22892.1"/>
    <property type="molecule type" value="Genomic_DNA"/>
</dbReference>
<dbReference type="PIR" id="S66056">
    <property type="entry name" value="S66056"/>
</dbReference>
<dbReference type="RefSeq" id="NP_387907.1">
    <property type="nucleotide sequence ID" value="NC_000964.3"/>
</dbReference>
<dbReference type="RefSeq" id="WP_003226779.1">
    <property type="nucleotide sequence ID" value="NZ_OZ025638.1"/>
</dbReference>
<dbReference type="SMR" id="P37535"/>
<dbReference type="FunCoup" id="P37535">
    <property type="interactions" value="14"/>
</dbReference>
<dbReference type="STRING" id="224308.BSU00260"/>
<dbReference type="PaxDb" id="224308-BSU00260"/>
<dbReference type="EnsemblBacteria" id="CAB11802">
    <property type="protein sequence ID" value="CAB11802"/>
    <property type="gene ID" value="BSU_00260"/>
</dbReference>
<dbReference type="GeneID" id="936551"/>
<dbReference type="KEGG" id="bsu:BSU00260"/>
<dbReference type="PATRIC" id="fig|224308.179.peg.26"/>
<dbReference type="eggNOG" id="COG3853">
    <property type="taxonomic scope" value="Bacteria"/>
</dbReference>
<dbReference type="InParanoid" id="P37535"/>
<dbReference type="OrthoDB" id="9768858at2"/>
<dbReference type="PhylomeDB" id="P37535"/>
<dbReference type="BioCyc" id="BSUB:BSU00260-MONOMER"/>
<dbReference type="Proteomes" id="UP000001570">
    <property type="component" value="Chromosome"/>
</dbReference>
<dbReference type="InterPro" id="IPR008863">
    <property type="entry name" value="Toxic_anion-R_TelA"/>
</dbReference>
<dbReference type="PANTHER" id="PTHR38432">
    <property type="entry name" value="TELA-LIKE PROTEIN SAOUHSC_01408"/>
    <property type="match status" value="1"/>
</dbReference>
<dbReference type="PANTHER" id="PTHR38432:SF1">
    <property type="entry name" value="TELA-LIKE PROTEIN SAOUHSC_01408"/>
    <property type="match status" value="1"/>
</dbReference>
<dbReference type="Pfam" id="PF05816">
    <property type="entry name" value="TelA"/>
    <property type="match status" value="1"/>
</dbReference>
<dbReference type="PIRSF" id="PIRSF026508">
    <property type="entry name" value="TelA"/>
    <property type="match status" value="1"/>
</dbReference>
<name>YAAN_BACSU</name>
<accession>P37535</accession>